<dbReference type="EC" id="7.1.1.2"/>
<dbReference type="EMBL" id="DQ312383">
    <property type="protein sequence ID" value="ABC47565.1"/>
    <property type="molecule type" value="Genomic_DNA"/>
</dbReference>
<dbReference type="SMR" id="Q1HUZ6"/>
<dbReference type="GO" id="GO:0005743">
    <property type="term" value="C:mitochondrial inner membrane"/>
    <property type="evidence" value="ECO:0000250"/>
    <property type="project" value="UniProtKB"/>
</dbReference>
<dbReference type="GO" id="GO:0045271">
    <property type="term" value="C:respiratory chain complex I"/>
    <property type="evidence" value="ECO:0000250"/>
    <property type="project" value="UniProtKB"/>
</dbReference>
<dbReference type="GO" id="GO:0008137">
    <property type="term" value="F:NADH dehydrogenase (ubiquinone) activity"/>
    <property type="evidence" value="ECO:0000250"/>
    <property type="project" value="UniProtKB"/>
</dbReference>
<dbReference type="GO" id="GO:0042773">
    <property type="term" value="P:ATP synthesis coupled electron transport"/>
    <property type="evidence" value="ECO:0007669"/>
    <property type="project" value="InterPro"/>
</dbReference>
<dbReference type="FunFam" id="1.10.287.3510:FF:000002">
    <property type="entry name" value="NADH-ubiquinone oxidoreductase chain 4L"/>
    <property type="match status" value="1"/>
</dbReference>
<dbReference type="Gene3D" id="1.10.287.3510">
    <property type="match status" value="1"/>
</dbReference>
<dbReference type="InterPro" id="IPR001133">
    <property type="entry name" value="NADH_UbQ_OxRdtase_chain4L/K"/>
</dbReference>
<dbReference type="InterPro" id="IPR039428">
    <property type="entry name" value="NUOK/Mnh_C1-like"/>
</dbReference>
<dbReference type="PANTHER" id="PTHR11434:SF0">
    <property type="entry name" value="NADH-UBIQUINONE OXIDOREDUCTASE CHAIN 4L"/>
    <property type="match status" value="1"/>
</dbReference>
<dbReference type="PANTHER" id="PTHR11434">
    <property type="entry name" value="NADH-UBIQUINONE OXIDOREDUCTASE SUBUNIT ND4L"/>
    <property type="match status" value="1"/>
</dbReference>
<dbReference type="Pfam" id="PF00420">
    <property type="entry name" value="Oxidored_q2"/>
    <property type="match status" value="1"/>
</dbReference>
<feature type="chain" id="PRO_0000275102" description="NADH-ubiquinone oxidoreductase chain 4L">
    <location>
        <begin position="1"/>
        <end position="98"/>
    </location>
</feature>
<feature type="transmembrane region" description="Helical" evidence="3">
    <location>
        <begin position="1"/>
        <end position="21"/>
    </location>
</feature>
<feature type="transmembrane region" description="Helical" evidence="3">
    <location>
        <begin position="29"/>
        <end position="49"/>
    </location>
</feature>
<feature type="transmembrane region" description="Helical" evidence="3">
    <location>
        <begin position="61"/>
        <end position="81"/>
    </location>
</feature>
<reference key="1">
    <citation type="journal article" date="2006" name="Mol. Phylogenet. Evol.">
        <title>Molecular systematics of Vampyressine bats (Phyllostomidae: Stenodermatinae) with comparison of direct and indirect surveys of mitochondrial DNA variation.</title>
        <authorList>
            <person name="Hoofer S.R."/>
            <person name="Baker R.J."/>
        </authorList>
    </citation>
    <scope>NUCLEOTIDE SEQUENCE [GENOMIC DNA]</scope>
</reference>
<evidence type="ECO:0000250" key="1">
    <source>
        <dbReference type="UniProtKB" id="P03901"/>
    </source>
</evidence>
<evidence type="ECO:0000250" key="2">
    <source>
        <dbReference type="UniProtKB" id="P03902"/>
    </source>
</evidence>
<evidence type="ECO:0000255" key="3"/>
<evidence type="ECO:0000305" key="4"/>
<geneLocation type="mitochondrion"/>
<gene>
    <name type="primary">MT-ND4L</name>
    <name type="synonym">MTND4L</name>
    <name type="synonym">NADH4L</name>
    <name type="synonym">ND4L</name>
</gene>
<proteinExistence type="inferred from homology"/>
<sequence>MSLTYMNMFMAFTISLLGLLLYRSHMMSSLLCLEGMMLSLFVMMTMIILNTHLTLASMIPIILLVFAACEAALGLSLLVMVSTTYGMDYVQNLNLLQC</sequence>
<comment type="function">
    <text evidence="1">Core subunit of the mitochondrial membrane respiratory chain NADH dehydrogenase (Complex I) which catalyzes electron transfer from NADH through the respiratory chain, using ubiquinone as an electron acceptor. Part of the enzyme membrane arm which is embedded in the lipid bilayer and involved in proton translocation.</text>
</comment>
<comment type="catalytic activity">
    <reaction evidence="1">
        <text>a ubiquinone + NADH + 5 H(+)(in) = a ubiquinol + NAD(+) + 4 H(+)(out)</text>
        <dbReference type="Rhea" id="RHEA:29091"/>
        <dbReference type="Rhea" id="RHEA-COMP:9565"/>
        <dbReference type="Rhea" id="RHEA-COMP:9566"/>
        <dbReference type="ChEBI" id="CHEBI:15378"/>
        <dbReference type="ChEBI" id="CHEBI:16389"/>
        <dbReference type="ChEBI" id="CHEBI:17976"/>
        <dbReference type="ChEBI" id="CHEBI:57540"/>
        <dbReference type="ChEBI" id="CHEBI:57945"/>
        <dbReference type="EC" id="7.1.1.2"/>
    </reaction>
    <physiologicalReaction direction="left-to-right" evidence="1">
        <dbReference type="Rhea" id="RHEA:29092"/>
    </physiologicalReaction>
</comment>
<comment type="subunit">
    <text evidence="2">Core subunit of respiratory chain NADH dehydrogenase (Complex I) which is composed of 45 different subunits.</text>
</comment>
<comment type="subcellular location">
    <subcellularLocation>
        <location evidence="2">Mitochondrion inner membrane</location>
        <topology evidence="3">Multi-pass membrane protein</topology>
    </subcellularLocation>
</comment>
<comment type="similarity">
    <text evidence="4">Belongs to the complex I subunit 4L family.</text>
</comment>
<keyword id="KW-0249">Electron transport</keyword>
<keyword id="KW-0472">Membrane</keyword>
<keyword id="KW-0496">Mitochondrion</keyword>
<keyword id="KW-0999">Mitochondrion inner membrane</keyword>
<keyword id="KW-0520">NAD</keyword>
<keyword id="KW-0679">Respiratory chain</keyword>
<keyword id="KW-1278">Translocase</keyword>
<keyword id="KW-0812">Transmembrane</keyword>
<keyword id="KW-1133">Transmembrane helix</keyword>
<keyword id="KW-0813">Transport</keyword>
<keyword id="KW-0830">Ubiquinone</keyword>
<name>NU4LM_PLABC</name>
<protein>
    <recommendedName>
        <fullName>NADH-ubiquinone oxidoreductase chain 4L</fullName>
        <ecNumber>7.1.1.2</ecNumber>
    </recommendedName>
    <alternativeName>
        <fullName>NADH dehydrogenase subunit 4L</fullName>
    </alternativeName>
</protein>
<organism>
    <name type="scientific">Platyrrhinus brachycephalus</name>
    <name type="common">Short-headed broad-nosed bat</name>
    <dbReference type="NCBI Taxonomy" id="249009"/>
    <lineage>
        <taxon>Eukaryota</taxon>
        <taxon>Metazoa</taxon>
        <taxon>Chordata</taxon>
        <taxon>Craniata</taxon>
        <taxon>Vertebrata</taxon>
        <taxon>Euteleostomi</taxon>
        <taxon>Mammalia</taxon>
        <taxon>Eutheria</taxon>
        <taxon>Laurasiatheria</taxon>
        <taxon>Chiroptera</taxon>
        <taxon>Yangochiroptera</taxon>
        <taxon>Phyllostomidae</taxon>
        <taxon>Stenodermatinae</taxon>
        <taxon>Platyrrhinus</taxon>
    </lineage>
</organism>
<accession>Q1HUZ6</accession>